<proteinExistence type="inferred from homology"/>
<organism>
    <name type="scientific">Cupriavidus pinatubonensis (strain JMP 134 / LMG 1197)</name>
    <name type="common">Cupriavidus necator (strain JMP 134)</name>
    <dbReference type="NCBI Taxonomy" id="264198"/>
    <lineage>
        <taxon>Bacteria</taxon>
        <taxon>Pseudomonadati</taxon>
        <taxon>Pseudomonadota</taxon>
        <taxon>Betaproteobacteria</taxon>
        <taxon>Burkholderiales</taxon>
        <taxon>Burkholderiaceae</taxon>
        <taxon>Cupriavidus</taxon>
    </lineage>
</organism>
<feature type="chain" id="PRO_0000223813" description="Acetyl-coenzyme A carboxylase carboxyl transferase subunit alpha">
    <location>
        <begin position="1"/>
        <end position="323"/>
    </location>
</feature>
<feature type="domain" description="CoA carboxyltransferase C-terminal" evidence="2">
    <location>
        <begin position="39"/>
        <end position="293"/>
    </location>
</feature>
<protein>
    <recommendedName>
        <fullName evidence="1">Acetyl-coenzyme A carboxylase carboxyl transferase subunit alpha</fullName>
        <shortName evidence="1">ACCase subunit alpha</shortName>
        <shortName evidence="1">Acetyl-CoA carboxylase carboxyltransferase subunit alpha</shortName>
        <ecNumber evidence="1">2.1.3.15</ecNumber>
    </recommendedName>
</protein>
<comment type="function">
    <text evidence="1">Component of the acetyl coenzyme A carboxylase (ACC) complex. First, biotin carboxylase catalyzes the carboxylation of biotin on its carrier protein (BCCP) and then the CO(2) group is transferred by the carboxyltransferase to acetyl-CoA to form malonyl-CoA.</text>
</comment>
<comment type="catalytic activity">
    <reaction evidence="1">
        <text>N(6)-carboxybiotinyl-L-lysyl-[protein] + acetyl-CoA = N(6)-biotinyl-L-lysyl-[protein] + malonyl-CoA</text>
        <dbReference type="Rhea" id="RHEA:54728"/>
        <dbReference type="Rhea" id="RHEA-COMP:10505"/>
        <dbReference type="Rhea" id="RHEA-COMP:10506"/>
        <dbReference type="ChEBI" id="CHEBI:57288"/>
        <dbReference type="ChEBI" id="CHEBI:57384"/>
        <dbReference type="ChEBI" id="CHEBI:83144"/>
        <dbReference type="ChEBI" id="CHEBI:83145"/>
        <dbReference type="EC" id="2.1.3.15"/>
    </reaction>
</comment>
<comment type="pathway">
    <text evidence="1">Lipid metabolism; malonyl-CoA biosynthesis; malonyl-CoA from acetyl-CoA: step 1/1.</text>
</comment>
<comment type="subunit">
    <text evidence="1">Acetyl-CoA carboxylase is a heterohexamer composed of biotin carboxyl carrier protein (AccB), biotin carboxylase (AccC) and two subunits each of ACCase subunit alpha (AccA) and ACCase subunit beta (AccD).</text>
</comment>
<comment type="subcellular location">
    <subcellularLocation>
        <location evidence="1">Cytoplasm</location>
    </subcellularLocation>
</comment>
<comment type="similarity">
    <text evidence="1">Belongs to the AccA family.</text>
</comment>
<accession>Q473D1</accession>
<gene>
    <name evidence="1" type="primary">accA</name>
    <name type="ordered locus">Reut_A1124</name>
</gene>
<name>ACCA_CUPPJ</name>
<sequence>MKTTFLDFEQPIAELEAKIEELRFVQDDSAVDISEEISRLAGKSQQLTKDIYANLTPWQVAQIARHPQRPYTLDYVREIFTDFHELHGDRTFADDLSIVGGLARFNGQSCMVIGHQKGRDTKERAMRNFGMPKPEGYRKAKRLMELADKFGLPIFTFVDTPGAFPGIDAEERGQSEAIGHNLYVMAGLKVPLIATIIGEGGSGGALAIAVGDVVQMLQFATYAVISPEGCASILWKTAEKAPEAAEALGLTAHRLKALGLIDKIVSEPLGGAHRDVKGMAAMLKRSLAESLRQFQGVSVKELQARRYERLLAYGKFKETGAQE</sequence>
<dbReference type="EC" id="2.1.3.15" evidence="1"/>
<dbReference type="EMBL" id="CP000090">
    <property type="protein sequence ID" value="AAZ60502.1"/>
    <property type="molecule type" value="Genomic_DNA"/>
</dbReference>
<dbReference type="SMR" id="Q473D1"/>
<dbReference type="STRING" id="264198.Reut_A1124"/>
<dbReference type="KEGG" id="reu:Reut_A1124"/>
<dbReference type="eggNOG" id="COG0825">
    <property type="taxonomic scope" value="Bacteria"/>
</dbReference>
<dbReference type="HOGENOM" id="CLU_015486_0_2_4"/>
<dbReference type="OrthoDB" id="9808023at2"/>
<dbReference type="UniPathway" id="UPA00655">
    <property type="reaction ID" value="UER00711"/>
</dbReference>
<dbReference type="GO" id="GO:0009317">
    <property type="term" value="C:acetyl-CoA carboxylase complex"/>
    <property type="evidence" value="ECO:0007669"/>
    <property type="project" value="InterPro"/>
</dbReference>
<dbReference type="GO" id="GO:0003989">
    <property type="term" value="F:acetyl-CoA carboxylase activity"/>
    <property type="evidence" value="ECO:0007669"/>
    <property type="project" value="InterPro"/>
</dbReference>
<dbReference type="GO" id="GO:0005524">
    <property type="term" value="F:ATP binding"/>
    <property type="evidence" value="ECO:0007669"/>
    <property type="project" value="UniProtKB-KW"/>
</dbReference>
<dbReference type="GO" id="GO:0016743">
    <property type="term" value="F:carboxyl- or carbamoyltransferase activity"/>
    <property type="evidence" value="ECO:0007669"/>
    <property type="project" value="UniProtKB-UniRule"/>
</dbReference>
<dbReference type="GO" id="GO:0006633">
    <property type="term" value="P:fatty acid biosynthetic process"/>
    <property type="evidence" value="ECO:0007669"/>
    <property type="project" value="UniProtKB-KW"/>
</dbReference>
<dbReference type="GO" id="GO:2001295">
    <property type="term" value="P:malonyl-CoA biosynthetic process"/>
    <property type="evidence" value="ECO:0007669"/>
    <property type="project" value="UniProtKB-UniRule"/>
</dbReference>
<dbReference type="Gene3D" id="3.90.226.10">
    <property type="entry name" value="2-enoyl-CoA Hydratase, Chain A, domain 1"/>
    <property type="match status" value="1"/>
</dbReference>
<dbReference type="HAMAP" id="MF_00823">
    <property type="entry name" value="AcetylCoA_CT_alpha"/>
    <property type="match status" value="1"/>
</dbReference>
<dbReference type="InterPro" id="IPR001095">
    <property type="entry name" value="Acetyl_CoA_COase_a_su"/>
</dbReference>
<dbReference type="InterPro" id="IPR029045">
    <property type="entry name" value="ClpP/crotonase-like_dom_sf"/>
</dbReference>
<dbReference type="InterPro" id="IPR011763">
    <property type="entry name" value="COA_CT_C"/>
</dbReference>
<dbReference type="NCBIfam" id="TIGR00513">
    <property type="entry name" value="accA"/>
    <property type="match status" value="1"/>
</dbReference>
<dbReference type="NCBIfam" id="NF041504">
    <property type="entry name" value="AccA_sub"/>
    <property type="match status" value="1"/>
</dbReference>
<dbReference type="NCBIfam" id="NF004344">
    <property type="entry name" value="PRK05724.1"/>
    <property type="match status" value="1"/>
</dbReference>
<dbReference type="PANTHER" id="PTHR42853">
    <property type="entry name" value="ACETYL-COENZYME A CARBOXYLASE CARBOXYL TRANSFERASE SUBUNIT ALPHA"/>
    <property type="match status" value="1"/>
</dbReference>
<dbReference type="PANTHER" id="PTHR42853:SF3">
    <property type="entry name" value="ACETYL-COENZYME A CARBOXYLASE CARBOXYL TRANSFERASE SUBUNIT ALPHA, CHLOROPLASTIC"/>
    <property type="match status" value="1"/>
</dbReference>
<dbReference type="Pfam" id="PF03255">
    <property type="entry name" value="ACCA"/>
    <property type="match status" value="1"/>
</dbReference>
<dbReference type="PRINTS" id="PR01069">
    <property type="entry name" value="ACCCTRFRASEA"/>
</dbReference>
<dbReference type="SUPFAM" id="SSF52096">
    <property type="entry name" value="ClpP/crotonase"/>
    <property type="match status" value="1"/>
</dbReference>
<dbReference type="PROSITE" id="PS50989">
    <property type="entry name" value="COA_CT_CTER"/>
    <property type="match status" value="1"/>
</dbReference>
<evidence type="ECO:0000255" key="1">
    <source>
        <dbReference type="HAMAP-Rule" id="MF_00823"/>
    </source>
</evidence>
<evidence type="ECO:0000255" key="2">
    <source>
        <dbReference type="PROSITE-ProRule" id="PRU01137"/>
    </source>
</evidence>
<keyword id="KW-0067">ATP-binding</keyword>
<keyword id="KW-0963">Cytoplasm</keyword>
<keyword id="KW-0275">Fatty acid biosynthesis</keyword>
<keyword id="KW-0276">Fatty acid metabolism</keyword>
<keyword id="KW-0444">Lipid biosynthesis</keyword>
<keyword id="KW-0443">Lipid metabolism</keyword>
<keyword id="KW-0547">Nucleotide-binding</keyword>
<keyword id="KW-0808">Transferase</keyword>
<reference key="1">
    <citation type="journal article" date="2010" name="PLoS ONE">
        <title>The complete multipartite genome sequence of Cupriavidus necator JMP134, a versatile pollutant degrader.</title>
        <authorList>
            <person name="Lykidis A."/>
            <person name="Perez-Pantoja D."/>
            <person name="Ledger T."/>
            <person name="Mavromatis K."/>
            <person name="Anderson I.J."/>
            <person name="Ivanova N.N."/>
            <person name="Hooper S.D."/>
            <person name="Lapidus A."/>
            <person name="Lucas S."/>
            <person name="Gonzalez B."/>
            <person name="Kyrpides N.C."/>
        </authorList>
    </citation>
    <scope>NUCLEOTIDE SEQUENCE [LARGE SCALE GENOMIC DNA]</scope>
    <source>
        <strain>JMP134 / LMG 1197</strain>
    </source>
</reference>